<evidence type="ECO:0000250" key="1">
    <source>
        <dbReference type="UniProtKB" id="S0EHD0"/>
    </source>
</evidence>
<evidence type="ECO:0000255" key="2">
    <source>
        <dbReference type="PROSITE-ProRule" id="PRU00684"/>
    </source>
</evidence>
<evidence type="ECO:0000255" key="3">
    <source>
        <dbReference type="PROSITE-ProRule" id="PRU00685"/>
    </source>
</evidence>
<evidence type="ECO:0000269" key="4">
    <source>
    </source>
</evidence>
<evidence type="ECO:0000269" key="5">
    <source>
    </source>
</evidence>
<evidence type="ECO:0000303" key="6">
    <source>
    </source>
</evidence>
<evidence type="ECO:0000305" key="7"/>
<evidence type="ECO:0000305" key="8">
    <source>
    </source>
</evidence>
<comment type="function">
    <text evidence="4 5 8">Glutathione S-transferase-like protein; part of the gene cluster that mediates the biosynthesis of the mycotoxin lucilactaene and the lucilactaene-related compound NG-391 that act as cell cycle inhibitors with potent growth inhibitory activity against malarial parasites, moderate growth inhibitory activity against cancer cells, and no activity against bacteria and fungi (PubMed:32043422, PubMed:35484225). Within the cluster, LUC7 and LUC8 encode proteins which are not commonly involved in the biosynthesis of secondary metabolites and are not essential for lucilactaene biosynthesis (Probable).</text>
</comment>
<comment type="similarity">
    <text evidence="7">Belongs to the GST superfamily.</text>
</comment>
<accession>A0A6J4B5J2</accession>
<gene>
    <name evidence="6" type="primary">LUC7</name>
</gene>
<organism>
    <name type="scientific">Fusarium sp</name>
    <dbReference type="NCBI Taxonomy" id="29916"/>
    <lineage>
        <taxon>Eukaryota</taxon>
        <taxon>Fungi</taxon>
        <taxon>Dikarya</taxon>
        <taxon>Ascomycota</taxon>
        <taxon>Pezizomycotina</taxon>
        <taxon>Sordariomycetes</taxon>
        <taxon>Hypocreomycetidae</taxon>
        <taxon>Hypocreales</taxon>
        <taxon>Nectriaceae</taxon>
        <taxon>Fusarium</taxon>
    </lineage>
</organism>
<name>LUC7_FUSSX</name>
<dbReference type="EC" id="2.5.1.-" evidence="1"/>
<dbReference type="EMBL" id="LC515193">
    <property type="protein sequence ID" value="BBQ09585.1"/>
    <property type="molecule type" value="Genomic_DNA"/>
</dbReference>
<dbReference type="SMR" id="A0A6J4B5J2"/>
<dbReference type="GO" id="GO:0005737">
    <property type="term" value="C:cytoplasm"/>
    <property type="evidence" value="ECO:0007669"/>
    <property type="project" value="TreeGrafter"/>
</dbReference>
<dbReference type="GO" id="GO:0005634">
    <property type="term" value="C:nucleus"/>
    <property type="evidence" value="ECO:0007669"/>
    <property type="project" value="TreeGrafter"/>
</dbReference>
<dbReference type="GO" id="GO:0016740">
    <property type="term" value="F:transferase activity"/>
    <property type="evidence" value="ECO:0007669"/>
    <property type="project" value="UniProtKB-KW"/>
</dbReference>
<dbReference type="GO" id="GO:0006414">
    <property type="term" value="P:translational elongation"/>
    <property type="evidence" value="ECO:0007669"/>
    <property type="project" value="TreeGrafter"/>
</dbReference>
<dbReference type="CDD" id="cd03181">
    <property type="entry name" value="GST_C_EF1Bgamma_like"/>
    <property type="match status" value="1"/>
</dbReference>
<dbReference type="CDD" id="cd03044">
    <property type="entry name" value="GST_N_EF1Bgamma"/>
    <property type="match status" value="1"/>
</dbReference>
<dbReference type="FunFam" id="1.20.1050.10:FF:000006">
    <property type="entry name" value="Elongation factor 1 gamma"/>
    <property type="match status" value="1"/>
</dbReference>
<dbReference type="FunFam" id="3.40.30.10:FF:000142">
    <property type="entry name" value="Elongation factor 1 gamma"/>
    <property type="match status" value="1"/>
</dbReference>
<dbReference type="Gene3D" id="1.20.1050.10">
    <property type="match status" value="1"/>
</dbReference>
<dbReference type="Gene3D" id="3.40.30.10">
    <property type="entry name" value="Glutaredoxin"/>
    <property type="match status" value="1"/>
</dbReference>
<dbReference type="InterPro" id="IPR050802">
    <property type="entry name" value="EF-GSTs"/>
</dbReference>
<dbReference type="InterPro" id="IPR010987">
    <property type="entry name" value="Glutathione-S-Trfase_C-like"/>
</dbReference>
<dbReference type="InterPro" id="IPR036282">
    <property type="entry name" value="Glutathione-S-Trfase_C_sf"/>
</dbReference>
<dbReference type="InterPro" id="IPR040079">
    <property type="entry name" value="Glutathione_S-Trfase"/>
</dbReference>
<dbReference type="InterPro" id="IPR004045">
    <property type="entry name" value="Glutathione_S-Trfase_N"/>
</dbReference>
<dbReference type="InterPro" id="IPR004046">
    <property type="entry name" value="GST_C"/>
</dbReference>
<dbReference type="InterPro" id="IPR036249">
    <property type="entry name" value="Thioredoxin-like_sf"/>
</dbReference>
<dbReference type="PANTHER" id="PTHR43986">
    <property type="entry name" value="ELONGATION FACTOR 1-GAMMA"/>
    <property type="match status" value="1"/>
</dbReference>
<dbReference type="PANTHER" id="PTHR43986:SF10">
    <property type="entry name" value="ELONGATION FACTOR EEF-1B GAMMA SUBUNIT, PUTATIVE (AFU_ORTHOLOGUE AFUA_1G17120)-RELATED"/>
    <property type="match status" value="1"/>
</dbReference>
<dbReference type="Pfam" id="PF00043">
    <property type="entry name" value="GST_C"/>
    <property type="match status" value="1"/>
</dbReference>
<dbReference type="Pfam" id="PF02798">
    <property type="entry name" value="GST_N"/>
    <property type="match status" value="1"/>
</dbReference>
<dbReference type="SFLD" id="SFLDS00019">
    <property type="entry name" value="Glutathione_Transferase_(cytos"/>
    <property type="match status" value="1"/>
</dbReference>
<dbReference type="SFLD" id="SFLDG00358">
    <property type="entry name" value="Main_(cytGST)"/>
    <property type="match status" value="1"/>
</dbReference>
<dbReference type="SUPFAM" id="SSF47616">
    <property type="entry name" value="GST C-terminal domain-like"/>
    <property type="match status" value="1"/>
</dbReference>
<dbReference type="SUPFAM" id="SSF52833">
    <property type="entry name" value="Thioredoxin-like"/>
    <property type="match status" value="1"/>
</dbReference>
<dbReference type="PROSITE" id="PS50405">
    <property type="entry name" value="GST_CTER"/>
    <property type="match status" value="1"/>
</dbReference>
<dbReference type="PROSITE" id="PS50404">
    <property type="entry name" value="GST_NTER"/>
    <property type="match status" value="1"/>
</dbReference>
<sequence length="219" mass="24623">MAPFGRLYSFMPNGRVFKILAAATLNGLEIEITPYQHMVDNKTPEFRAKFPAGKVPAFEGADGLLLPESDAIAQYLAQSGPYSEQLLGRDAATSAKIRQWISFFDGEVYPHMLDLVIWRVGIAPFDQSTETKALARLEFALDVLEKHLDGRKWLVGDELTLADLTGASSLLWAFMHIIDASERKRFPSVVAWYLRTIETEEVKEVFGPPNLIDVKRVHE</sequence>
<protein>
    <recommendedName>
        <fullName evidence="6">Glutathione S-transferase-like protein LUC7</fullName>
        <ecNumber evidence="1">2.5.1.-</ecNumber>
    </recommendedName>
    <alternativeName>
        <fullName evidence="6">Lucilactaene biosynthesis cluster protein 7</fullName>
    </alternativeName>
</protein>
<feature type="chain" id="PRO_0000454640" description="Glutathione S-transferase-like protein LUC7">
    <location>
        <begin position="1"/>
        <end position="219"/>
    </location>
</feature>
<feature type="domain" description="GST N-terminal" evidence="2">
    <location>
        <begin position="3"/>
        <end position="84"/>
    </location>
</feature>
<feature type="domain" description="GST C-terminal" evidence="3">
    <location>
        <begin position="90"/>
        <end position="219"/>
    </location>
</feature>
<reference key="1">
    <citation type="journal article" date="2020" name="Biosci. Biotechnol. Biochem.">
        <title>Biosynthetic gene cluster identification and biological activity of lucilactaene from Fusarium sp. RK97-94.</title>
        <authorList>
            <person name="Kato S."/>
            <person name="Motoyama T."/>
            <person name="Futamura Y."/>
            <person name="Uramoto M."/>
            <person name="Nogawa T."/>
            <person name="Hayashi T."/>
            <person name="Hirota H."/>
            <person name="Tanaka A."/>
            <person name="Takahashi-Ando N."/>
            <person name="Kamakura T."/>
            <person name="Osada H."/>
        </authorList>
    </citation>
    <scope>NUCLEOTIDE SEQUENCE [GENOMIC DNA]</scope>
    <scope>FUNCTION</scope>
    <scope>PATHWAY</scope>
    <source>
        <strain>RK97-94</strain>
    </source>
</reference>
<reference key="2">
    <citation type="journal article" date="2022" name="J. Antibiot.">
        <title>Isolation of new lucilactaene derivatives from P450 monooxygenase and aldehyde dehydrogenase knockout Fusarium sp. RK97-94 strains and their biological activities.</title>
        <authorList>
            <person name="Abdelhakim I.A."/>
            <person name="Motoyama T."/>
            <person name="Nogawa T."/>
            <person name="Mahmud F.B."/>
            <person name="Futamura Y."/>
            <person name="Takahashi S."/>
            <person name="Osada H."/>
        </authorList>
    </citation>
    <scope>FUNCTION</scope>
</reference>
<proteinExistence type="inferred from homology"/>
<keyword id="KW-0808">Transferase</keyword>